<dbReference type="EMBL" id="M80425">
    <property type="protein sequence ID" value="AAA22063.1"/>
    <property type="molecule type" value="Genomic_DNA"/>
</dbReference>
<dbReference type="PIR" id="PQ0271">
    <property type="entry name" value="PQ0271"/>
</dbReference>
<dbReference type="SMR" id="P35664"/>
<dbReference type="Gene3D" id="3.30.1340.30">
    <property type="match status" value="1"/>
</dbReference>
<dbReference type="InterPro" id="IPR007055">
    <property type="entry name" value="BON_dom"/>
</dbReference>
<dbReference type="InterPro" id="IPR051686">
    <property type="entry name" value="Lipoprotein_DolP"/>
</dbReference>
<dbReference type="InterPro" id="IPR014004">
    <property type="entry name" value="Transpt-assoc_nodulatn_dom_bac"/>
</dbReference>
<dbReference type="PANTHER" id="PTHR34606">
    <property type="entry name" value="BON DOMAIN-CONTAINING PROTEIN"/>
    <property type="match status" value="1"/>
</dbReference>
<dbReference type="PANTHER" id="PTHR34606:SF15">
    <property type="entry name" value="BON DOMAIN-CONTAINING PROTEIN"/>
    <property type="match status" value="1"/>
</dbReference>
<dbReference type="Pfam" id="PF04972">
    <property type="entry name" value="BON"/>
    <property type="match status" value="2"/>
</dbReference>
<dbReference type="SMART" id="SM00749">
    <property type="entry name" value="BON"/>
    <property type="match status" value="2"/>
</dbReference>
<dbReference type="PROSITE" id="PS50914">
    <property type="entry name" value="BON"/>
    <property type="match status" value="2"/>
</dbReference>
<proteinExistence type="predicted"/>
<sequence length="151" mass="16637">IDDAAILIKINKELFQHGIFSSITVRVSEGRVLLTGTVDSPDKRLKAERVAWQQSEVKEVVNEIAVDKDEVTLKEVAIDSAISAQIKARMVAHAGIKSVNYSINTVGGVVYLMGIAQSQKELNSVIGISKRVKGVKQVISYVRLKHSKLRR</sequence>
<protein>
    <recommendedName>
        <fullName>Uncharacterized protein in gshII 5'region</fullName>
    </recommendedName>
</protein>
<evidence type="ECO:0000255" key="1">
    <source>
        <dbReference type="PROSITE-ProRule" id="PRU00229"/>
    </source>
</evidence>
<keyword id="KW-0677">Repeat</keyword>
<organism>
    <name type="scientific">Anaplasma centrale</name>
    <dbReference type="NCBI Taxonomy" id="769"/>
    <lineage>
        <taxon>Bacteria</taxon>
        <taxon>Pseudomonadati</taxon>
        <taxon>Pseudomonadota</taxon>
        <taxon>Alphaproteobacteria</taxon>
        <taxon>Rickettsiales</taxon>
        <taxon>Anaplasmataceae</taxon>
        <taxon>Anaplasma</taxon>
    </lineage>
</organism>
<feature type="chain" id="PRO_0000066245" description="Uncharacterized protein in gshII 5'region">
    <location>
        <begin position="1" status="less than"/>
        <end position="151"/>
    </location>
</feature>
<feature type="domain" description="BON 1" evidence="1">
    <location>
        <begin position="2"/>
        <end position="68"/>
    </location>
</feature>
<feature type="domain" description="BON 2" evidence="1">
    <location>
        <begin position="78"/>
        <end position="146"/>
    </location>
</feature>
<feature type="non-terminal residue">
    <location>
        <position position="1"/>
    </location>
</feature>
<name>YGS2_ANACE</name>
<accession>P35664</accession>
<reference key="1">
    <citation type="journal article" date="1992" name="Biochem. Biophys. Res. Commun.">
        <title>Sequence of a putative glutathione synthetase II gene and flanking regions from Anaplasma centrale.</title>
        <authorList>
            <person name="Peters J.M."/>
            <person name="Dalrymple B.P."/>
            <person name="Jorgensen W.K."/>
        </authorList>
    </citation>
    <scope>NUCLEOTIDE SEQUENCE [GENOMIC DNA]</scope>
</reference>